<evidence type="ECO:0000269" key="1">
    <source>
    </source>
</evidence>
<evidence type="ECO:0000303" key="2">
    <source>
    </source>
</evidence>
<evidence type="ECO:0000305" key="3"/>
<evidence type="ECO:0000312" key="4">
    <source>
        <dbReference type="EMBL" id="AEP06470.1"/>
    </source>
</evidence>
<gene>
    <name evidence="2" type="primary">aidA</name>
    <name evidence="4" type="ORF">ABZJ_02010</name>
</gene>
<sequence>MGKSLNNVPQAPLDVQFDSNDVKCSAYLYRPTTEVATPMIVMAHGLGGTRRMRLTAFAERFVAEGYACLVFDYRYFGDSEGQPRQLLDIKSQLEDWKAAIAYARSLDKIDPNRVVIWGTSFGGGHVLATAANDNRLAAVISQCPFTDGFSSSMAMNPITTLKLMGLALKDKIGSILGAKPVMVPLAAPSGHTALMNAPDAYSGYLALMPSGSNIPNYVAARFVLDIIRYYPGRKTSRIQAPVLFCVCDTDSVAPSKTTLRHASHTPNHEIKHYADGHFEIYVGEAFERVVRDQIDFLKRIVPVK</sequence>
<accession>G2JHL6</accession>
<name>AIDA_ACIBM</name>
<reference key="1">
    <citation type="journal article" date="2011" name="Antimicrob. Agents Chemother.">
        <title>Genomic analysis of the multidrug-resistant Acinetobacter baumannii strain MDR-ZJ06 widely spread in China.</title>
        <authorList>
            <person name="Zhou H."/>
            <person name="Zhang T."/>
            <person name="Yu D."/>
            <person name="Pi B."/>
            <person name="Yang Q."/>
            <person name="Zhou J."/>
            <person name="Hu S."/>
            <person name="Yu Y."/>
        </authorList>
    </citation>
    <scope>NUCLEOTIDE SEQUENCE [LARGE SCALE GENOMIC DNA]</scope>
    <source>
        <strain>MDR-ZJ06</strain>
    </source>
</reference>
<reference key="2">
    <citation type="journal article" date="2017" name="PLoS ONE">
        <title>Quorum sensing network in clinical strains of A. baumannii: AidA is a new quorum quenching enzyme.</title>
        <authorList>
            <person name="Lopez M."/>
            <person name="Mayer C."/>
            <person name="Fernandez-Garcia L."/>
            <person name="Blasco L."/>
            <person name="Muras A."/>
            <person name="Ruiz F.M."/>
            <person name="Bou G."/>
            <person name="Otero A."/>
            <person name="Tomas M."/>
        </authorList>
    </citation>
    <scope>FUNCTION IN QUORUM QUENCHING</scope>
    <scope>INDUCTION</scope>
    <source>
        <strain>ST-2_clon_2010</strain>
    </source>
</reference>
<proteinExistence type="evidence at protein level"/>
<organism>
    <name type="scientific">Acinetobacter baumannii (strain MDR-ZJ06)</name>
    <dbReference type="NCBI Taxonomy" id="497978"/>
    <lineage>
        <taxon>Bacteria</taxon>
        <taxon>Pseudomonadati</taxon>
        <taxon>Pseudomonadota</taxon>
        <taxon>Gammaproteobacteria</taxon>
        <taxon>Moraxellales</taxon>
        <taxon>Moraxellaceae</taxon>
        <taxon>Acinetobacter</taxon>
        <taxon>Acinetobacter calcoaceticus/baumannii complex</taxon>
    </lineage>
</organism>
<feature type="chain" id="PRO_0000445037" description="Quorum-quenching protein AidA">
    <location>
        <begin position="1"/>
        <end position="304"/>
    </location>
</feature>
<keyword id="KW-0378">Hydrolase</keyword>
<comment type="function">
    <text evidence="1">Involved in quorum quenching (QQ). Inhibits motility and biofilm formation. Could contribute in bacterial competition, as it is capable of hydrolyzing the signaling molecules that mediate interspecies communication.</text>
</comment>
<comment type="induction">
    <text evidence="1">Down-regulated in the presence of H(2)O(2).</text>
</comment>
<comment type="similarity">
    <text evidence="3">Belongs to the AB hydrolase superfamily.</text>
</comment>
<dbReference type="EMBL" id="CP001937">
    <property type="protein sequence ID" value="AEP06470.1"/>
    <property type="molecule type" value="Genomic_DNA"/>
</dbReference>
<dbReference type="RefSeq" id="WP_000520419.1">
    <property type="nucleotide sequence ID" value="NC_017171.2"/>
</dbReference>
<dbReference type="SMR" id="G2JHL6"/>
<dbReference type="ESTHER" id="aciba-aida">
    <property type="family name" value="Xaa-Pro-like_dom"/>
</dbReference>
<dbReference type="KEGG" id="abz:ABZJ_02010"/>
<dbReference type="PATRIC" id="fig|497978.4.peg.1944"/>
<dbReference type="HOGENOM" id="CLU_048587_1_0_6"/>
<dbReference type="Proteomes" id="UP000009290">
    <property type="component" value="Chromosome"/>
</dbReference>
<dbReference type="GO" id="GO:0052689">
    <property type="term" value="F:carboxylic ester hydrolase activity"/>
    <property type="evidence" value="ECO:0007669"/>
    <property type="project" value="UniProtKB-ARBA"/>
</dbReference>
<dbReference type="Gene3D" id="3.40.50.1820">
    <property type="entry name" value="alpha/beta hydrolase"/>
    <property type="match status" value="1"/>
</dbReference>
<dbReference type="InterPro" id="IPR029058">
    <property type="entry name" value="AB_hydrolase_fold"/>
</dbReference>
<dbReference type="InterPro" id="IPR050261">
    <property type="entry name" value="FrsA_esterase"/>
</dbReference>
<dbReference type="InterPro" id="IPR000383">
    <property type="entry name" value="Xaa-Pro-like_dom"/>
</dbReference>
<dbReference type="PANTHER" id="PTHR22946">
    <property type="entry name" value="DIENELACTONE HYDROLASE DOMAIN-CONTAINING PROTEIN-RELATED"/>
    <property type="match status" value="1"/>
</dbReference>
<dbReference type="PANTHER" id="PTHR22946:SF9">
    <property type="entry name" value="POLYKETIDE TRANSFERASE AF380"/>
    <property type="match status" value="1"/>
</dbReference>
<dbReference type="Pfam" id="PF02129">
    <property type="entry name" value="Peptidase_S15"/>
    <property type="match status" value="1"/>
</dbReference>
<dbReference type="SUPFAM" id="SSF53474">
    <property type="entry name" value="alpha/beta-Hydrolases"/>
    <property type="match status" value="1"/>
</dbReference>
<protein>
    <recommendedName>
        <fullName evidence="3">Quorum-quenching protein AidA</fullName>
    </recommendedName>
    <alternativeName>
        <fullName evidence="2">Quorum-quenching enzyme</fullName>
        <shortName evidence="2">QQ enzyme</shortName>
    </alternativeName>
</protein>